<dbReference type="EMBL" id="CP000743">
    <property type="protein sequence ID" value="ABR55656.1"/>
    <property type="molecule type" value="Genomic_DNA"/>
</dbReference>
<dbReference type="RefSeq" id="WP_011972788.1">
    <property type="nucleotide sequence ID" value="NC_009635.1"/>
</dbReference>
<dbReference type="SMR" id="A6UT34"/>
<dbReference type="STRING" id="419665.Maeo_0064"/>
<dbReference type="GeneID" id="5327543"/>
<dbReference type="KEGG" id="mae:Maeo_0064"/>
<dbReference type="eggNOG" id="arCOG04102">
    <property type="taxonomic scope" value="Archaea"/>
</dbReference>
<dbReference type="HOGENOM" id="CLU_135754_2_2_2"/>
<dbReference type="OrthoDB" id="24971at2157"/>
<dbReference type="Proteomes" id="UP000001106">
    <property type="component" value="Chromosome"/>
</dbReference>
<dbReference type="GO" id="GO:0005886">
    <property type="term" value="C:plasma membrane"/>
    <property type="evidence" value="ECO:0007669"/>
    <property type="project" value="UniProtKB-SubCell"/>
</dbReference>
<dbReference type="GO" id="GO:0005524">
    <property type="term" value="F:ATP binding"/>
    <property type="evidence" value="ECO:0007669"/>
    <property type="project" value="UniProtKB-UniRule"/>
</dbReference>
<dbReference type="GO" id="GO:0046933">
    <property type="term" value="F:proton-transporting ATP synthase activity, rotational mechanism"/>
    <property type="evidence" value="ECO:0007669"/>
    <property type="project" value="UniProtKB-UniRule"/>
</dbReference>
<dbReference type="GO" id="GO:0046961">
    <property type="term" value="F:proton-transporting ATPase activity, rotational mechanism"/>
    <property type="evidence" value="ECO:0007669"/>
    <property type="project" value="InterPro"/>
</dbReference>
<dbReference type="GO" id="GO:0042777">
    <property type="term" value="P:proton motive force-driven plasma membrane ATP synthesis"/>
    <property type="evidence" value="ECO:0007669"/>
    <property type="project" value="UniProtKB-UniRule"/>
</dbReference>
<dbReference type="Gene3D" id="3.40.50.10580">
    <property type="entry name" value="ATPase, V1 complex, subunit F"/>
    <property type="match status" value="1"/>
</dbReference>
<dbReference type="HAMAP" id="MF_00312">
    <property type="entry name" value="ATP_synth_F_arch"/>
    <property type="match status" value="1"/>
</dbReference>
<dbReference type="InterPro" id="IPR008218">
    <property type="entry name" value="ATPase_V1-cplx_f_g_su"/>
</dbReference>
<dbReference type="InterPro" id="IPR022944">
    <property type="entry name" value="ATPase_V1-cplx_fsu_bac/arc"/>
</dbReference>
<dbReference type="InterPro" id="IPR036906">
    <property type="entry name" value="ATPase_V1_fsu_sf"/>
</dbReference>
<dbReference type="NCBIfam" id="NF003047">
    <property type="entry name" value="PRK03957.1"/>
    <property type="match status" value="1"/>
</dbReference>
<dbReference type="Pfam" id="PF01990">
    <property type="entry name" value="ATP-synt_F"/>
    <property type="match status" value="1"/>
</dbReference>
<dbReference type="SUPFAM" id="SSF159468">
    <property type="entry name" value="AtpF-like"/>
    <property type="match status" value="1"/>
</dbReference>
<sequence length="99" mass="11048">MKIAVVGDLDMTMGFRLAGLEDVYEVKNAEDALNTIRELDNRADIGLIITTERLGEEIRDSISNLKKFIVEIPDKNGAIVREHDPVKTLVRKAVGVELK</sequence>
<gene>
    <name evidence="1" type="primary">atpF</name>
    <name type="ordered locus">Maeo_0064</name>
</gene>
<accession>A6UT34</accession>
<name>AATF_META3</name>
<keyword id="KW-0066">ATP synthesis</keyword>
<keyword id="KW-1003">Cell membrane</keyword>
<keyword id="KW-0375">Hydrogen ion transport</keyword>
<keyword id="KW-0406">Ion transport</keyword>
<keyword id="KW-0472">Membrane</keyword>
<keyword id="KW-0813">Transport</keyword>
<reference key="1">
    <citation type="submission" date="2007-06" db="EMBL/GenBank/DDBJ databases">
        <title>Complete sequence of Methanococcus aeolicus Nankai-3.</title>
        <authorList>
            <consortium name="US DOE Joint Genome Institute"/>
            <person name="Copeland A."/>
            <person name="Lucas S."/>
            <person name="Lapidus A."/>
            <person name="Barry K."/>
            <person name="Glavina del Rio T."/>
            <person name="Dalin E."/>
            <person name="Tice H."/>
            <person name="Pitluck S."/>
            <person name="Chain P."/>
            <person name="Malfatti S."/>
            <person name="Shin M."/>
            <person name="Vergez L."/>
            <person name="Schmutz J."/>
            <person name="Larimer F."/>
            <person name="Land M."/>
            <person name="Hauser L."/>
            <person name="Kyrpides N."/>
            <person name="Lykidis A."/>
            <person name="Sieprawska-Lupa M."/>
            <person name="Whitman W.B."/>
            <person name="Richardson P."/>
        </authorList>
    </citation>
    <scope>NUCLEOTIDE SEQUENCE [LARGE SCALE GENOMIC DNA]</scope>
    <source>
        <strain>ATCC BAA-1280 / DSM 17508 / OCM 812 / Nankai-3</strain>
    </source>
</reference>
<proteinExistence type="inferred from homology"/>
<feature type="chain" id="PRO_1000059425" description="A-type ATP synthase subunit F">
    <location>
        <begin position="1"/>
        <end position="99"/>
    </location>
</feature>
<organism>
    <name type="scientific">Methanococcus aeolicus (strain ATCC BAA-1280 / DSM 17508 / OCM 812 / Nankai-3)</name>
    <dbReference type="NCBI Taxonomy" id="419665"/>
    <lineage>
        <taxon>Archaea</taxon>
        <taxon>Methanobacteriati</taxon>
        <taxon>Methanobacteriota</taxon>
        <taxon>Methanomada group</taxon>
        <taxon>Methanococci</taxon>
        <taxon>Methanococcales</taxon>
        <taxon>Methanococcaceae</taxon>
        <taxon>Methanococcus</taxon>
    </lineage>
</organism>
<protein>
    <recommendedName>
        <fullName evidence="1">A-type ATP synthase subunit F</fullName>
    </recommendedName>
</protein>
<evidence type="ECO:0000255" key="1">
    <source>
        <dbReference type="HAMAP-Rule" id="MF_00312"/>
    </source>
</evidence>
<comment type="function">
    <text evidence="1">Component of the A-type ATP synthase that produces ATP from ADP in the presence of a proton gradient across the membrane.</text>
</comment>
<comment type="subunit">
    <text evidence="1">Has multiple subunits with at least A(3), B(3), C, D, E, F, H, I and proteolipid K(x).</text>
</comment>
<comment type="subcellular location">
    <subcellularLocation>
        <location evidence="1">Cell membrane</location>
        <topology evidence="1">Peripheral membrane protein</topology>
    </subcellularLocation>
</comment>
<comment type="similarity">
    <text evidence="1">Belongs to the V-ATPase F subunit family.</text>
</comment>